<feature type="chain" id="PRO_1000126127" description="Malate dehydrogenase">
    <location>
        <begin position="1"/>
        <end position="320"/>
    </location>
</feature>
<feature type="active site" description="Proton acceptor" evidence="1">
    <location>
        <position position="176"/>
    </location>
</feature>
<feature type="binding site" evidence="1">
    <location>
        <begin position="10"/>
        <end position="15"/>
    </location>
    <ligand>
        <name>NAD(+)</name>
        <dbReference type="ChEBI" id="CHEBI:57540"/>
    </ligand>
</feature>
<feature type="binding site" evidence="1">
    <location>
        <position position="34"/>
    </location>
    <ligand>
        <name>NAD(+)</name>
        <dbReference type="ChEBI" id="CHEBI:57540"/>
    </ligand>
</feature>
<feature type="binding site" evidence="1">
    <location>
        <position position="83"/>
    </location>
    <ligand>
        <name>substrate</name>
    </ligand>
</feature>
<feature type="binding site" evidence="1">
    <location>
        <position position="89"/>
    </location>
    <ligand>
        <name>substrate</name>
    </ligand>
</feature>
<feature type="binding site" evidence="1">
    <location>
        <position position="96"/>
    </location>
    <ligand>
        <name>NAD(+)</name>
        <dbReference type="ChEBI" id="CHEBI:57540"/>
    </ligand>
</feature>
<feature type="binding site" evidence="1">
    <location>
        <begin position="119"/>
        <end position="121"/>
    </location>
    <ligand>
        <name>NAD(+)</name>
        <dbReference type="ChEBI" id="CHEBI:57540"/>
    </ligand>
</feature>
<feature type="binding site" evidence="1">
    <location>
        <position position="121"/>
    </location>
    <ligand>
        <name>substrate</name>
    </ligand>
</feature>
<feature type="binding site" evidence="1">
    <location>
        <position position="152"/>
    </location>
    <ligand>
        <name>substrate</name>
    </ligand>
</feature>
<comment type="function">
    <text evidence="1">Catalyzes the reversible oxidation of malate to oxaloacetate.</text>
</comment>
<comment type="catalytic activity">
    <reaction evidence="1">
        <text>(S)-malate + NAD(+) = oxaloacetate + NADH + H(+)</text>
        <dbReference type="Rhea" id="RHEA:21432"/>
        <dbReference type="ChEBI" id="CHEBI:15378"/>
        <dbReference type="ChEBI" id="CHEBI:15589"/>
        <dbReference type="ChEBI" id="CHEBI:16452"/>
        <dbReference type="ChEBI" id="CHEBI:57540"/>
        <dbReference type="ChEBI" id="CHEBI:57945"/>
        <dbReference type="EC" id="1.1.1.37"/>
    </reaction>
</comment>
<comment type="similarity">
    <text evidence="1">Belongs to the LDH/MDH superfamily. MDH type 3 family.</text>
</comment>
<organism>
    <name type="scientific">Brucella abortus (strain S19)</name>
    <dbReference type="NCBI Taxonomy" id="430066"/>
    <lineage>
        <taxon>Bacteria</taxon>
        <taxon>Pseudomonadati</taxon>
        <taxon>Pseudomonadota</taxon>
        <taxon>Alphaproteobacteria</taxon>
        <taxon>Hyphomicrobiales</taxon>
        <taxon>Brucellaceae</taxon>
        <taxon>Brucella/Ochrobactrum group</taxon>
        <taxon>Brucella</taxon>
    </lineage>
</organism>
<evidence type="ECO:0000255" key="1">
    <source>
        <dbReference type="HAMAP-Rule" id="MF_00487"/>
    </source>
</evidence>
<reference key="1">
    <citation type="journal article" date="2008" name="PLoS ONE">
        <title>Genome sequence of Brucella abortus vaccine strain S19 compared to virulent strains yields candidate virulence genes.</title>
        <authorList>
            <person name="Crasta O.R."/>
            <person name="Folkerts O."/>
            <person name="Fei Z."/>
            <person name="Mane S.P."/>
            <person name="Evans C."/>
            <person name="Martino-Catt S."/>
            <person name="Bricker B."/>
            <person name="Yu G."/>
            <person name="Du L."/>
            <person name="Sobral B.W."/>
        </authorList>
    </citation>
    <scope>NUCLEOTIDE SEQUENCE [LARGE SCALE GENOMIC DNA]</scope>
    <source>
        <strain>S19</strain>
    </source>
</reference>
<sequence>MARNKIALIGSGMIGGTLAHLAGLKELGDVVLFDIAEGTPQGKGLDIAESSPVDGFDAKFTGANDYAAIEGADVVIVTAGVPRKPGMSRDDLLGINLKVMEQVGAGIKKYAPEAFVICITNPLDAMVWALQKFSGLPAHKVVGMAGVLDSARFRYFLSEEFNVSVEDVTVFVLGGHGDSMVPLARYSTVAGIPLPDLVKMGWTSQDKLDKIIQRTRDGGAEIVGLLKTGSAFYAPAASAIQMAESYLKDKKRVLPVAAQLSGQYGVKDMYVGVPTVIGANGVERIIEIDLDKDEKAQFDKSVASVAGLCEACIGIAPSLK</sequence>
<proteinExistence type="inferred from homology"/>
<name>MDH_BRUA1</name>
<accession>B2S881</accession>
<keyword id="KW-0520">NAD</keyword>
<keyword id="KW-0560">Oxidoreductase</keyword>
<keyword id="KW-0816">Tricarboxylic acid cycle</keyword>
<gene>
    <name evidence="1" type="primary">mdh</name>
    <name type="ordered locus">BAbS19_I18080</name>
</gene>
<protein>
    <recommendedName>
        <fullName evidence="1">Malate dehydrogenase</fullName>
        <ecNumber evidence="1">1.1.1.37</ecNumber>
    </recommendedName>
</protein>
<dbReference type="EC" id="1.1.1.37" evidence="1"/>
<dbReference type="EMBL" id="CP000887">
    <property type="protein sequence ID" value="ACD73290.1"/>
    <property type="molecule type" value="Genomic_DNA"/>
</dbReference>
<dbReference type="RefSeq" id="WP_002964995.1">
    <property type="nucleotide sequence ID" value="NC_010742.1"/>
</dbReference>
<dbReference type="SMR" id="B2S881"/>
<dbReference type="GeneID" id="93017742"/>
<dbReference type="KEGG" id="bmc:BAbS19_I18080"/>
<dbReference type="HOGENOM" id="CLU_045401_2_1_5"/>
<dbReference type="Proteomes" id="UP000002565">
    <property type="component" value="Chromosome 1"/>
</dbReference>
<dbReference type="GO" id="GO:0004459">
    <property type="term" value="F:L-lactate dehydrogenase activity"/>
    <property type="evidence" value="ECO:0007669"/>
    <property type="project" value="TreeGrafter"/>
</dbReference>
<dbReference type="GO" id="GO:0030060">
    <property type="term" value="F:L-malate dehydrogenase (NAD+) activity"/>
    <property type="evidence" value="ECO:0007669"/>
    <property type="project" value="UniProtKB-UniRule"/>
</dbReference>
<dbReference type="GO" id="GO:0006089">
    <property type="term" value="P:lactate metabolic process"/>
    <property type="evidence" value="ECO:0007669"/>
    <property type="project" value="TreeGrafter"/>
</dbReference>
<dbReference type="GO" id="GO:0006099">
    <property type="term" value="P:tricarboxylic acid cycle"/>
    <property type="evidence" value="ECO:0007669"/>
    <property type="project" value="UniProtKB-UniRule"/>
</dbReference>
<dbReference type="CDD" id="cd01339">
    <property type="entry name" value="LDH-like_MDH"/>
    <property type="match status" value="1"/>
</dbReference>
<dbReference type="FunFam" id="3.40.50.720:FF:000018">
    <property type="entry name" value="Malate dehydrogenase"/>
    <property type="match status" value="1"/>
</dbReference>
<dbReference type="FunFam" id="3.90.110.10:FF:000004">
    <property type="entry name" value="Malate dehydrogenase"/>
    <property type="match status" value="1"/>
</dbReference>
<dbReference type="Gene3D" id="3.90.110.10">
    <property type="entry name" value="Lactate dehydrogenase/glycoside hydrolase, family 4, C-terminal"/>
    <property type="match status" value="1"/>
</dbReference>
<dbReference type="Gene3D" id="3.40.50.720">
    <property type="entry name" value="NAD(P)-binding Rossmann-like Domain"/>
    <property type="match status" value="1"/>
</dbReference>
<dbReference type="HAMAP" id="MF_00487">
    <property type="entry name" value="Malate_dehydrog_3"/>
    <property type="match status" value="1"/>
</dbReference>
<dbReference type="InterPro" id="IPR001557">
    <property type="entry name" value="L-lactate/malate_DH"/>
</dbReference>
<dbReference type="InterPro" id="IPR022383">
    <property type="entry name" value="Lactate/malate_DH_C"/>
</dbReference>
<dbReference type="InterPro" id="IPR001236">
    <property type="entry name" value="Lactate/malate_DH_N"/>
</dbReference>
<dbReference type="InterPro" id="IPR015955">
    <property type="entry name" value="Lactate_DH/Glyco_Ohase_4_C"/>
</dbReference>
<dbReference type="InterPro" id="IPR011275">
    <property type="entry name" value="Malate_DH_type3"/>
</dbReference>
<dbReference type="InterPro" id="IPR036291">
    <property type="entry name" value="NAD(P)-bd_dom_sf"/>
</dbReference>
<dbReference type="NCBIfam" id="TIGR01763">
    <property type="entry name" value="MalateDH_bact"/>
    <property type="match status" value="1"/>
</dbReference>
<dbReference type="NCBIfam" id="NF004863">
    <property type="entry name" value="PRK06223.1"/>
    <property type="match status" value="1"/>
</dbReference>
<dbReference type="PANTHER" id="PTHR43128">
    <property type="entry name" value="L-2-HYDROXYCARBOXYLATE DEHYDROGENASE (NAD(P)(+))"/>
    <property type="match status" value="1"/>
</dbReference>
<dbReference type="PANTHER" id="PTHR43128:SF16">
    <property type="entry name" value="L-LACTATE DEHYDROGENASE"/>
    <property type="match status" value="1"/>
</dbReference>
<dbReference type="Pfam" id="PF02866">
    <property type="entry name" value="Ldh_1_C"/>
    <property type="match status" value="1"/>
</dbReference>
<dbReference type="Pfam" id="PF00056">
    <property type="entry name" value="Ldh_1_N"/>
    <property type="match status" value="1"/>
</dbReference>
<dbReference type="PIRSF" id="PIRSF000102">
    <property type="entry name" value="Lac_mal_DH"/>
    <property type="match status" value="1"/>
</dbReference>
<dbReference type="PRINTS" id="PR00086">
    <property type="entry name" value="LLDHDRGNASE"/>
</dbReference>
<dbReference type="SUPFAM" id="SSF56327">
    <property type="entry name" value="LDH C-terminal domain-like"/>
    <property type="match status" value="1"/>
</dbReference>
<dbReference type="SUPFAM" id="SSF51735">
    <property type="entry name" value="NAD(P)-binding Rossmann-fold domains"/>
    <property type="match status" value="1"/>
</dbReference>